<feature type="chain" id="PRO_0000130799" description="Large ribosomal subunit protein uL24">
    <location>
        <begin position="1"/>
        <end position="146"/>
    </location>
</feature>
<feature type="region of interest" description="Disordered" evidence="1">
    <location>
        <begin position="1"/>
        <end position="33"/>
    </location>
</feature>
<feature type="compositionally biased region" description="Basic residues" evidence="1">
    <location>
        <begin position="9"/>
        <end position="18"/>
    </location>
</feature>
<comment type="similarity">
    <text evidence="2">Belongs to the universal ribosomal protein uL24 family.</text>
</comment>
<name>RL26_BRACM</name>
<gene>
    <name type="primary">RPL26</name>
</gene>
<dbReference type="EMBL" id="D78495">
    <property type="protein sequence ID" value="BAA18941.1"/>
    <property type="molecule type" value="mRNA"/>
</dbReference>
<dbReference type="Proteomes" id="UP000011750">
    <property type="component" value="Unplaced"/>
</dbReference>
<dbReference type="GO" id="GO:0022625">
    <property type="term" value="C:cytosolic large ribosomal subunit"/>
    <property type="evidence" value="ECO:0000318"/>
    <property type="project" value="GO_Central"/>
</dbReference>
<dbReference type="GO" id="GO:0003723">
    <property type="term" value="F:RNA binding"/>
    <property type="evidence" value="ECO:0000318"/>
    <property type="project" value="GO_Central"/>
</dbReference>
<dbReference type="GO" id="GO:0003735">
    <property type="term" value="F:structural constituent of ribosome"/>
    <property type="evidence" value="ECO:0000318"/>
    <property type="project" value="GO_Central"/>
</dbReference>
<dbReference type="GO" id="GO:0002181">
    <property type="term" value="P:cytoplasmic translation"/>
    <property type="evidence" value="ECO:0000318"/>
    <property type="project" value="GO_Central"/>
</dbReference>
<dbReference type="GO" id="GO:0042273">
    <property type="term" value="P:ribosomal large subunit biogenesis"/>
    <property type="evidence" value="ECO:0000318"/>
    <property type="project" value="GO_Central"/>
</dbReference>
<dbReference type="CDD" id="cd06089">
    <property type="entry name" value="KOW_RPL26"/>
    <property type="match status" value="1"/>
</dbReference>
<dbReference type="FunFam" id="2.30.30.30:FF:000009">
    <property type="entry name" value="60S ribosomal protein L26"/>
    <property type="match status" value="1"/>
</dbReference>
<dbReference type="Gene3D" id="2.30.30.30">
    <property type="match status" value="1"/>
</dbReference>
<dbReference type="InterPro" id="IPR014722">
    <property type="entry name" value="Rib_uL2_dom2"/>
</dbReference>
<dbReference type="InterPro" id="IPR005756">
    <property type="entry name" value="Ribosomal_uL24_euk/arc"/>
</dbReference>
<dbReference type="InterPro" id="IPR041988">
    <property type="entry name" value="Ribosomal_uL24_KOW"/>
</dbReference>
<dbReference type="InterPro" id="IPR008991">
    <property type="entry name" value="Translation_prot_SH3-like_sf"/>
</dbReference>
<dbReference type="NCBIfam" id="TIGR01080">
    <property type="entry name" value="rplX_A_E"/>
    <property type="match status" value="1"/>
</dbReference>
<dbReference type="PANTHER" id="PTHR11143">
    <property type="entry name" value="60S RIBOSOMAL PROTEIN L26 FAMILY MEMBER"/>
    <property type="match status" value="1"/>
</dbReference>
<dbReference type="Pfam" id="PF16906">
    <property type="entry name" value="Ribosomal_L26"/>
    <property type="match status" value="1"/>
</dbReference>
<dbReference type="SUPFAM" id="SSF50104">
    <property type="entry name" value="Translation proteins SH3-like domain"/>
    <property type="match status" value="1"/>
</dbReference>
<accession>Q39411</accession>
<evidence type="ECO:0000256" key="1">
    <source>
        <dbReference type="SAM" id="MobiDB-lite"/>
    </source>
</evidence>
<evidence type="ECO:0000305" key="2"/>
<proteinExistence type="evidence at transcript level"/>
<protein>
    <recommendedName>
        <fullName evidence="2">Large ribosomal subunit protein uL24</fullName>
    </recommendedName>
    <alternativeName>
        <fullName>60S ribosomal protein L26</fullName>
    </alternativeName>
</protein>
<organism>
    <name type="scientific">Brassica campestris</name>
    <name type="common">Field mustard</name>
    <dbReference type="NCBI Taxonomy" id="3711"/>
    <lineage>
        <taxon>Eukaryota</taxon>
        <taxon>Viridiplantae</taxon>
        <taxon>Streptophyta</taxon>
        <taxon>Embryophyta</taxon>
        <taxon>Tracheophyta</taxon>
        <taxon>Spermatophyta</taxon>
        <taxon>Magnoliopsida</taxon>
        <taxon>eudicotyledons</taxon>
        <taxon>Gunneridae</taxon>
        <taxon>Pentapetalae</taxon>
        <taxon>rosids</taxon>
        <taxon>malvids</taxon>
        <taxon>Brassicales</taxon>
        <taxon>Brassicaceae</taxon>
        <taxon>Brassiceae</taxon>
        <taxon>Brassica</taxon>
    </lineage>
</organism>
<reference key="1">
    <citation type="journal article" date="1996" name="Sex. Plant Reprod.">
        <title>Identification of genes expressed in the shoot apex of Brassica campestris during floral transition.</title>
        <authorList>
            <person name="Kitashiba H."/>
            <person name="Iwai T."/>
            <person name="Toriyama K."/>
            <person name="Watanabe M."/>
            <person name="Hinata K."/>
        </authorList>
        <dbReference type="AGRICOLA" id="IND20526774"/>
    </citation>
    <scope>NUCLEOTIDE SEQUENCE [MRNA]</scope>
    <source>
        <strain>cv. Osome</strain>
        <tissue>Shoot apex</tissue>
    </source>
</reference>
<keyword id="KW-1185">Reference proteome</keyword>
<keyword id="KW-0687">Ribonucleoprotein</keyword>
<keyword id="KW-0689">Ribosomal protein</keyword>
<sequence>MKYNPRVTSSRRRNRKPHFTASSSERRVXMSSPLSTDLRQKYNVRSMPIRKDDEXQIVRGTYKGREGKLXQVYRRKXVIHIERLTREKVNGTTVNVGVQPTKVVITKLRLDKDRKSLLERKAKGRAAADKDKGTKFTAVDVMQNVX</sequence>